<dbReference type="EC" id="2.4.2.10" evidence="1"/>
<dbReference type="EMBL" id="AE017198">
    <property type="protein sequence ID" value="AAS09104.1"/>
    <property type="molecule type" value="Genomic_DNA"/>
</dbReference>
<dbReference type="RefSeq" id="WP_011162110.1">
    <property type="nucleotide sequence ID" value="NC_005362.1"/>
</dbReference>
<dbReference type="SMR" id="Q74J27"/>
<dbReference type="GeneID" id="83570287"/>
<dbReference type="KEGG" id="ljo:LJ_1283"/>
<dbReference type="eggNOG" id="COG0461">
    <property type="taxonomic scope" value="Bacteria"/>
</dbReference>
<dbReference type="HOGENOM" id="CLU_074878_1_1_9"/>
<dbReference type="UniPathway" id="UPA00070">
    <property type="reaction ID" value="UER00119"/>
</dbReference>
<dbReference type="Proteomes" id="UP000000581">
    <property type="component" value="Chromosome"/>
</dbReference>
<dbReference type="GO" id="GO:0000287">
    <property type="term" value="F:magnesium ion binding"/>
    <property type="evidence" value="ECO:0007669"/>
    <property type="project" value="UniProtKB-UniRule"/>
</dbReference>
<dbReference type="GO" id="GO:0004588">
    <property type="term" value="F:orotate phosphoribosyltransferase activity"/>
    <property type="evidence" value="ECO:0007669"/>
    <property type="project" value="UniProtKB-UniRule"/>
</dbReference>
<dbReference type="GO" id="GO:0044205">
    <property type="term" value="P:'de novo' UMP biosynthetic process"/>
    <property type="evidence" value="ECO:0007669"/>
    <property type="project" value="UniProtKB-UniRule"/>
</dbReference>
<dbReference type="GO" id="GO:0019856">
    <property type="term" value="P:pyrimidine nucleobase biosynthetic process"/>
    <property type="evidence" value="ECO:0007669"/>
    <property type="project" value="TreeGrafter"/>
</dbReference>
<dbReference type="CDD" id="cd06223">
    <property type="entry name" value="PRTases_typeI"/>
    <property type="match status" value="1"/>
</dbReference>
<dbReference type="Gene3D" id="3.40.50.2020">
    <property type="match status" value="1"/>
</dbReference>
<dbReference type="HAMAP" id="MF_01208">
    <property type="entry name" value="PyrE"/>
    <property type="match status" value="1"/>
</dbReference>
<dbReference type="InterPro" id="IPR023031">
    <property type="entry name" value="OPRT"/>
</dbReference>
<dbReference type="InterPro" id="IPR004467">
    <property type="entry name" value="Or_phspho_trans_dom"/>
</dbReference>
<dbReference type="InterPro" id="IPR000836">
    <property type="entry name" value="PRibTrfase_dom"/>
</dbReference>
<dbReference type="InterPro" id="IPR029057">
    <property type="entry name" value="PRTase-like"/>
</dbReference>
<dbReference type="NCBIfam" id="TIGR00336">
    <property type="entry name" value="pyrE"/>
    <property type="match status" value="1"/>
</dbReference>
<dbReference type="PANTHER" id="PTHR19278">
    <property type="entry name" value="OROTATE PHOSPHORIBOSYLTRANSFERASE"/>
    <property type="match status" value="1"/>
</dbReference>
<dbReference type="PANTHER" id="PTHR19278:SF9">
    <property type="entry name" value="URIDINE 5'-MONOPHOSPHATE SYNTHASE"/>
    <property type="match status" value="1"/>
</dbReference>
<dbReference type="Pfam" id="PF00156">
    <property type="entry name" value="Pribosyltran"/>
    <property type="match status" value="1"/>
</dbReference>
<dbReference type="SUPFAM" id="SSF53271">
    <property type="entry name" value="PRTase-like"/>
    <property type="match status" value="1"/>
</dbReference>
<dbReference type="PROSITE" id="PS00103">
    <property type="entry name" value="PUR_PYR_PR_TRANSFER"/>
    <property type="match status" value="1"/>
</dbReference>
<proteinExistence type="inferred from homology"/>
<protein>
    <recommendedName>
        <fullName evidence="1">Orotate phosphoribosyltransferase</fullName>
        <shortName evidence="1">OPRT</shortName>
        <shortName evidence="1">OPRTase</shortName>
        <ecNumber evidence="1">2.4.2.10</ecNumber>
    </recommendedName>
</protein>
<gene>
    <name evidence="1" type="primary">pyrE</name>
    <name type="ordered locus">LJ_1283</name>
</gene>
<reference key="1">
    <citation type="journal article" date="2004" name="Proc. Natl. Acad. Sci. U.S.A.">
        <title>The genome sequence of the probiotic intestinal bacterium Lactobacillus johnsonii NCC 533.</title>
        <authorList>
            <person name="Pridmore R.D."/>
            <person name="Berger B."/>
            <person name="Desiere F."/>
            <person name="Vilanova D."/>
            <person name="Barretto C."/>
            <person name="Pittet A.-C."/>
            <person name="Zwahlen M.-C."/>
            <person name="Rouvet M."/>
            <person name="Altermann E."/>
            <person name="Barrangou R."/>
            <person name="Mollet B."/>
            <person name="Mercenier A."/>
            <person name="Klaenhammer T."/>
            <person name="Arigoni F."/>
            <person name="Schell M.A."/>
        </authorList>
    </citation>
    <scope>NUCLEOTIDE SEQUENCE [LARGE SCALE GENOMIC DNA]</scope>
    <source>
        <strain>CNCM I-1225 / La1 / NCC 533</strain>
    </source>
</reference>
<accession>Q74J27</accession>
<feature type="chain" id="PRO_0000110703" description="Orotate phosphoribosyltransferase">
    <location>
        <begin position="1"/>
        <end position="212"/>
    </location>
</feature>
<feature type="binding site" evidence="1">
    <location>
        <position position="95"/>
    </location>
    <ligand>
        <name>5-phospho-alpha-D-ribose 1-diphosphate</name>
        <dbReference type="ChEBI" id="CHEBI:58017"/>
        <note>ligand shared between dimeric partners</note>
    </ligand>
</feature>
<feature type="binding site" evidence="1">
    <location>
        <position position="99"/>
    </location>
    <ligand>
        <name>5-phospho-alpha-D-ribose 1-diphosphate</name>
        <dbReference type="ChEBI" id="CHEBI:58017"/>
        <note>ligand shared between dimeric partners</note>
    </ligand>
</feature>
<feature type="binding site" evidence="1">
    <location>
        <position position="101"/>
    </location>
    <ligand>
        <name>5-phospho-alpha-D-ribose 1-diphosphate</name>
        <dbReference type="ChEBI" id="CHEBI:58017"/>
        <note>ligand shared between dimeric partners</note>
    </ligand>
</feature>
<feature type="binding site" description="in other chain" evidence="1">
    <location>
        <begin position="121"/>
        <end position="129"/>
    </location>
    <ligand>
        <name>5-phospho-alpha-D-ribose 1-diphosphate</name>
        <dbReference type="ChEBI" id="CHEBI:58017"/>
        <note>ligand shared between dimeric partners</note>
    </ligand>
</feature>
<feature type="binding site" evidence="1">
    <location>
        <position position="125"/>
    </location>
    <ligand>
        <name>orotate</name>
        <dbReference type="ChEBI" id="CHEBI:30839"/>
    </ligand>
</feature>
<organism>
    <name type="scientific">Lactobacillus johnsonii (strain CNCM I-12250 / La1 / NCC 533)</name>
    <dbReference type="NCBI Taxonomy" id="257314"/>
    <lineage>
        <taxon>Bacteria</taxon>
        <taxon>Bacillati</taxon>
        <taxon>Bacillota</taxon>
        <taxon>Bacilli</taxon>
        <taxon>Lactobacillales</taxon>
        <taxon>Lactobacillaceae</taxon>
        <taxon>Lactobacillus</taxon>
    </lineage>
</organism>
<evidence type="ECO:0000255" key="1">
    <source>
        <dbReference type="HAMAP-Rule" id="MF_01208"/>
    </source>
</evidence>
<sequence length="212" mass="23543">MHKDQIISQLIKEKIITISPDKPFTYASGMLSPIYTDLRLTVSYPDLRDMIASDLSNLIAAEFPQATIIGGVATAGIPHAALVAEKLHLPMIYVRPKPKDHGKGRQIEGRFSENDQIVLIDDLITTGGSVLNAVKATEKDGGKVAGVASIFTYYLPDAKENFKEANVKYTPLLSYPELLKKENESGHITSDQYDILKTWHEDPWAWGKKFNS</sequence>
<name>PYRE_LACJO</name>
<keyword id="KW-0328">Glycosyltransferase</keyword>
<keyword id="KW-0460">Magnesium</keyword>
<keyword id="KW-0665">Pyrimidine biosynthesis</keyword>
<keyword id="KW-0808">Transferase</keyword>
<comment type="function">
    <text evidence="1">Catalyzes the transfer of a ribosyl phosphate group from 5-phosphoribose 1-diphosphate to orotate, leading to the formation of orotidine monophosphate (OMP).</text>
</comment>
<comment type="catalytic activity">
    <reaction evidence="1">
        <text>orotidine 5'-phosphate + diphosphate = orotate + 5-phospho-alpha-D-ribose 1-diphosphate</text>
        <dbReference type="Rhea" id="RHEA:10380"/>
        <dbReference type="ChEBI" id="CHEBI:30839"/>
        <dbReference type="ChEBI" id="CHEBI:33019"/>
        <dbReference type="ChEBI" id="CHEBI:57538"/>
        <dbReference type="ChEBI" id="CHEBI:58017"/>
        <dbReference type="EC" id="2.4.2.10"/>
    </reaction>
</comment>
<comment type="cofactor">
    <cofactor evidence="1">
        <name>Mg(2+)</name>
        <dbReference type="ChEBI" id="CHEBI:18420"/>
    </cofactor>
</comment>
<comment type="pathway">
    <text evidence="1">Pyrimidine metabolism; UMP biosynthesis via de novo pathway; UMP from orotate: step 1/2.</text>
</comment>
<comment type="subunit">
    <text evidence="1">Homodimer.</text>
</comment>
<comment type="similarity">
    <text evidence="1">Belongs to the purine/pyrimidine phosphoribosyltransferase family. PyrE subfamily.</text>
</comment>